<reference key="1">
    <citation type="submission" date="2006-09" db="EMBL/GenBank/DDBJ databases">
        <title>Complete sequence of Rhodopseudomonas palustris BisA53.</title>
        <authorList>
            <consortium name="US DOE Joint Genome Institute"/>
            <person name="Copeland A."/>
            <person name="Lucas S."/>
            <person name="Lapidus A."/>
            <person name="Barry K."/>
            <person name="Detter J.C."/>
            <person name="Glavina del Rio T."/>
            <person name="Hammon N."/>
            <person name="Israni S."/>
            <person name="Dalin E."/>
            <person name="Tice H."/>
            <person name="Pitluck S."/>
            <person name="Chain P."/>
            <person name="Malfatti S."/>
            <person name="Shin M."/>
            <person name="Vergez L."/>
            <person name="Schmutz J."/>
            <person name="Larimer F."/>
            <person name="Land M."/>
            <person name="Hauser L."/>
            <person name="Pelletier D.A."/>
            <person name="Kyrpides N."/>
            <person name="Kim E."/>
            <person name="Harwood C.S."/>
            <person name="Oda Y."/>
            <person name="Richardson P."/>
        </authorList>
    </citation>
    <scope>NUCLEOTIDE SEQUENCE [LARGE SCALE GENOMIC DNA]</scope>
    <source>
        <strain>BisA53</strain>
    </source>
</reference>
<organism>
    <name type="scientific">Rhodopseudomonas palustris (strain BisA53)</name>
    <dbReference type="NCBI Taxonomy" id="316055"/>
    <lineage>
        <taxon>Bacteria</taxon>
        <taxon>Pseudomonadati</taxon>
        <taxon>Pseudomonadota</taxon>
        <taxon>Alphaproteobacteria</taxon>
        <taxon>Hyphomicrobiales</taxon>
        <taxon>Nitrobacteraceae</taxon>
        <taxon>Rhodopseudomonas</taxon>
    </lineage>
</organism>
<gene>
    <name evidence="1" type="primary">rimP</name>
    <name type="ordered locus">RPE_0199</name>
</gene>
<name>RIMP_RHOP5</name>
<proteinExistence type="inferred from homology"/>
<accession>Q07V75</accession>
<evidence type="ECO:0000255" key="1">
    <source>
        <dbReference type="HAMAP-Rule" id="MF_01077"/>
    </source>
</evidence>
<evidence type="ECO:0000256" key="2">
    <source>
        <dbReference type="SAM" id="MobiDB-lite"/>
    </source>
</evidence>
<comment type="function">
    <text evidence="1">Required for maturation of 30S ribosomal subunits.</text>
</comment>
<comment type="subcellular location">
    <subcellularLocation>
        <location evidence="1">Cytoplasm</location>
    </subcellularLocation>
</comment>
<comment type="similarity">
    <text evidence="1">Belongs to the RimP family.</text>
</comment>
<sequence length="272" mass="29588">MKPMPDQTDILPATADPIPAELLELLSEPRLVVEPGVAARVAAVAGPVLHGMGYRLVRIKVSGELGCTVQIMAERPDGTMLIEDCEAISKALSPVLDVADPIDKAYRLEVSSPGIDRPLVRRSDFERYAGYLVKIDMAVPHQGRKRFRGILGGIEGDAVHLQREGVRGDDDPAVLLTIEDISDARLVLTDELIAESMRRGKIAEREMKQNLGILPPPPPHAKKSDPTKSNAPKPKAAKAKSKVAKTPPKNTKEHRLAAERLRRGDIDPPEGD</sequence>
<protein>
    <recommendedName>
        <fullName evidence="1">Ribosome maturation factor RimP</fullName>
    </recommendedName>
</protein>
<keyword id="KW-0963">Cytoplasm</keyword>
<keyword id="KW-0690">Ribosome biogenesis</keyword>
<feature type="chain" id="PRO_0000384746" description="Ribosome maturation factor RimP">
    <location>
        <begin position="1"/>
        <end position="272"/>
    </location>
</feature>
<feature type="region of interest" description="Disordered" evidence="2">
    <location>
        <begin position="209"/>
        <end position="272"/>
    </location>
</feature>
<feature type="compositionally biased region" description="Basic and acidic residues" evidence="2">
    <location>
        <begin position="250"/>
        <end position="266"/>
    </location>
</feature>
<dbReference type="EMBL" id="CP000463">
    <property type="protein sequence ID" value="ABJ04159.1"/>
    <property type="molecule type" value="Genomic_DNA"/>
</dbReference>
<dbReference type="SMR" id="Q07V75"/>
<dbReference type="STRING" id="316055.RPE_0199"/>
<dbReference type="KEGG" id="rpe:RPE_0199"/>
<dbReference type="eggNOG" id="COG0779">
    <property type="taxonomic scope" value="Bacteria"/>
</dbReference>
<dbReference type="HOGENOM" id="CLU_070525_0_0_5"/>
<dbReference type="GO" id="GO:0005829">
    <property type="term" value="C:cytosol"/>
    <property type="evidence" value="ECO:0007669"/>
    <property type="project" value="TreeGrafter"/>
</dbReference>
<dbReference type="GO" id="GO:0000028">
    <property type="term" value="P:ribosomal small subunit assembly"/>
    <property type="evidence" value="ECO:0007669"/>
    <property type="project" value="TreeGrafter"/>
</dbReference>
<dbReference type="GO" id="GO:0006412">
    <property type="term" value="P:translation"/>
    <property type="evidence" value="ECO:0007669"/>
    <property type="project" value="TreeGrafter"/>
</dbReference>
<dbReference type="CDD" id="cd01734">
    <property type="entry name" value="YlxS_C"/>
    <property type="match status" value="1"/>
</dbReference>
<dbReference type="Gene3D" id="3.30.300.70">
    <property type="entry name" value="RimP-like superfamily, N-terminal"/>
    <property type="match status" value="1"/>
</dbReference>
<dbReference type="HAMAP" id="MF_01077">
    <property type="entry name" value="RimP"/>
    <property type="match status" value="1"/>
</dbReference>
<dbReference type="InterPro" id="IPR003728">
    <property type="entry name" value="Ribosome_maturation_RimP"/>
</dbReference>
<dbReference type="InterPro" id="IPR028998">
    <property type="entry name" value="RimP_C"/>
</dbReference>
<dbReference type="InterPro" id="IPR036847">
    <property type="entry name" value="RimP_C_sf"/>
</dbReference>
<dbReference type="InterPro" id="IPR028989">
    <property type="entry name" value="RimP_N"/>
</dbReference>
<dbReference type="InterPro" id="IPR035956">
    <property type="entry name" value="RimP_N_sf"/>
</dbReference>
<dbReference type="NCBIfam" id="NF000932">
    <property type="entry name" value="PRK00092.2-5"/>
    <property type="match status" value="1"/>
</dbReference>
<dbReference type="NCBIfam" id="NF000933">
    <property type="entry name" value="PRK00092.2-6"/>
    <property type="match status" value="1"/>
</dbReference>
<dbReference type="PANTHER" id="PTHR33867">
    <property type="entry name" value="RIBOSOME MATURATION FACTOR RIMP"/>
    <property type="match status" value="1"/>
</dbReference>
<dbReference type="PANTHER" id="PTHR33867:SF1">
    <property type="entry name" value="RIBOSOME MATURATION FACTOR RIMP"/>
    <property type="match status" value="1"/>
</dbReference>
<dbReference type="Pfam" id="PF17384">
    <property type="entry name" value="DUF150_C"/>
    <property type="match status" value="1"/>
</dbReference>
<dbReference type="Pfam" id="PF02576">
    <property type="entry name" value="RimP_N"/>
    <property type="match status" value="1"/>
</dbReference>
<dbReference type="SUPFAM" id="SSF74942">
    <property type="entry name" value="YhbC-like, C-terminal domain"/>
    <property type="match status" value="1"/>
</dbReference>
<dbReference type="SUPFAM" id="SSF75420">
    <property type="entry name" value="YhbC-like, N-terminal domain"/>
    <property type="match status" value="1"/>
</dbReference>